<name>NDHK_OENAR</name>
<geneLocation type="chloroplast"/>
<proteinExistence type="inferred from homology"/>
<accession>B0Z4L3</accession>
<comment type="function">
    <text evidence="1">NDH shuttles electrons from NAD(P)H:plastoquinone, via FMN and iron-sulfur (Fe-S) centers, to quinones in the photosynthetic chain and possibly in a chloroplast respiratory chain. The immediate electron acceptor for the enzyme in this species is believed to be plastoquinone. Couples the redox reaction to proton translocation, and thus conserves the redox energy in a proton gradient.</text>
</comment>
<comment type="catalytic activity">
    <reaction evidence="1">
        <text>a plastoquinone + NADH + (n+1) H(+)(in) = a plastoquinol + NAD(+) + n H(+)(out)</text>
        <dbReference type="Rhea" id="RHEA:42608"/>
        <dbReference type="Rhea" id="RHEA-COMP:9561"/>
        <dbReference type="Rhea" id="RHEA-COMP:9562"/>
        <dbReference type="ChEBI" id="CHEBI:15378"/>
        <dbReference type="ChEBI" id="CHEBI:17757"/>
        <dbReference type="ChEBI" id="CHEBI:57540"/>
        <dbReference type="ChEBI" id="CHEBI:57945"/>
        <dbReference type="ChEBI" id="CHEBI:62192"/>
    </reaction>
</comment>
<comment type="catalytic activity">
    <reaction evidence="1">
        <text>a plastoquinone + NADPH + (n+1) H(+)(in) = a plastoquinol + NADP(+) + n H(+)(out)</text>
        <dbReference type="Rhea" id="RHEA:42612"/>
        <dbReference type="Rhea" id="RHEA-COMP:9561"/>
        <dbReference type="Rhea" id="RHEA-COMP:9562"/>
        <dbReference type="ChEBI" id="CHEBI:15378"/>
        <dbReference type="ChEBI" id="CHEBI:17757"/>
        <dbReference type="ChEBI" id="CHEBI:57783"/>
        <dbReference type="ChEBI" id="CHEBI:58349"/>
        <dbReference type="ChEBI" id="CHEBI:62192"/>
    </reaction>
</comment>
<comment type="cofactor">
    <cofactor evidence="1">
        <name>[4Fe-4S] cluster</name>
        <dbReference type="ChEBI" id="CHEBI:49883"/>
    </cofactor>
    <text evidence="1">Binds 1 [4Fe-4S] cluster.</text>
</comment>
<comment type="subunit">
    <text evidence="1">NDH is composed of at least 16 different subunits, 5 of which are encoded in the nucleus.</text>
</comment>
<comment type="subcellular location">
    <subcellularLocation>
        <location evidence="1">Plastid</location>
        <location evidence="1">Chloroplast thylakoid membrane</location>
        <topology evidence="1">Peripheral membrane protein</topology>
        <orientation evidence="1">Stromal side</orientation>
    </subcellularLocation>
</comment>
<comment type="similarity">
    <text evidence="1">Belongs to the complex I 20 kDa subunit family.</text>
</comment>
<protein>
    <recommendedName>
        <fullName evidence="1">NAD(P)H-quinone oxidoreductase subunit K, chloroplastic</fullName>
        <ecNumber evidence="1">7.1.1.-</ecNumber>
    </recommendedName>
    <alternativeName>
        <fullName evidence="1">NAD(P)H dehydrogenase subunit K</fullName>
    </alternativeName>
    <alternativeName>
        <fullName evidence="1">NADH-plastoquinone oxidoreductase subunit K</fullName>
    </alternativeName>
</protein>
<organism>
    <name type="scientific">Oenothera argillicola</name>
    <name type="common">Appalachian evening primrose</name>
    <dbReference type="NCBI Taxonomy" id="3940"/>
    <lineage>
        <taxon>Eukaryota</taxon>
        <taxon>Viridiplantae</taxon>
        <taxon>Streptophyta</taxon>
        <taxon>Embryophyta</taxon>
        <taxon>Tracheophyta</taxon>
        <taxon>Spermatophyta</taxon>
        <taxon>Magnoliopsida</taxon>
        <taxon>eudicotyledons</taxon>
        <taxon>Gunneridae</taxon>
        <taxon>Pentapetalae</taxon>
        <taxon>rosids</taxon>
        <taxon>malvids</taxon>
        <taxon>Myrtales</taxon>
        <taxon>Onagraceae</taxon>
        <taxon>Onagroideae</taxon>
        <taxon>Onagreae</taxon>
        <taxon>Oenothera</taxon>
    </lineage>
</organism>
<feature type="chain" id="PRO_0000358567" description="NAD(P)H-quinone oxidoreductase subunit K, chloroplastic">
    <location>
        <begin position="1"/>
        <end position="225"/>
    </location>
</feature>
<feature type="binding site" evidence="1">
    <location>
        <position position="43"/>
    </location>
    <ligand>
        <name>[4Fe-4S] cluster</name>
        <dbReference type="ChEBI" id="CHEBI:49883"/>
    </ligand>
</feature>
<feature type="binding site" evidence="1">
    <location>
        <position position="44"/>
    </location>
    <ligand>
        <name>[4Fe-4S] cluster</name>
        <dbReference type="ChEBI" id="CHEBI:49883"/>
    </ligand>
</feature>
<feature type="binding site" evidence="1">
    <location>
        <position position="108"/>
    </location>
    <ligand>
        <name>[4Fe-4S] cluster</name>
        <dbReference type="ChEBI" id="CHEBI:49883"/>
    </ligand>
</feature>
<feature type="binding site" evidence="1">
    <location>
        <position position="139"/>
    </location>
    <ligand>
        <name>[4Fe-4S] cluster</name>
        <dbReference type="ChEBI" id="CHEBI:49883"/>
    </ligand>
</feature>
<sequence length="225" mass="25259">MNSIEFTLLARRTQNSVISTTSNDLSNWSRLSSLWPLLYGTSCCFIEFASLIGSRFDFDRYGLVPRSSPRQADLILTAGTVTMKMAPSLVRLYEQMPEPKYVIAMGACTITGGMFSTDSYSTVRGVDKLIPVDVYLPGCPPKPEAIIDAITKLRKKISREIYEDRIRSQEENRCFTTNHKFHVGPSMHTGNYDPGLLYQLPSTSEIASETFFKYKSSVSAHELVN</sequence>
<reference key="1">
    <citation type="journal article" date="2008" name="Nucleic Acids Res.">
        <title>The complete nucleotide sequences of the five genetically distinct plastid genomes of Oenothera, subsection Oenothera: I. Sequence evaluation and plastome evolution.</title>
        <authorList>
            <person name="Greiner S."/>
            <person name="Wang X."/>
            <person name="Rauwolf U."/>
            <person name="Silber M.V."/>
            <person name="Mayer K."/>
            <person name="Meurer J."/>
            <person name="Haberer G."/>
            <person name="Herrmann R.G."/>
        </authorList>
    </citation>
    <scope>NUCLEOTIDE SEQUENCE [LARGE SCALE GENOMIC DNA]</scope>
    <source>
        <strain>cv. Douthat 1</strain>
    </source>
</reference>
<dbReference type="EC" id="7.1.1.-" evidence="1"/>
<dbReference type="EMBL" id="EU262887">
    <property type="protein sequence ID" value="ABW98691.1"/>
    <property type="molecule type" value="Genomic_DNA"/>
</dbReference>
<dbReference type="RefSeq" id="YP_001687124.1">
    <property type="nucleotide sequence ID" value="NC_010358.2"/>
</dbReference>
<dbReference type="SMR" id="B0Z4L3"/>
<dbReference type="GeneID" id="5951877"/>
<dbReference type="GO" id="GO:0009535">
    <property type="term" value="C:chloroplast thylakoid membrane"/>
    <property type="evidence" value="ECO:0007669"/>
    <property type="project" value="UniProtKB-SubCell"/>
</dbReference>
<dbReference type="GO" id="GO:0045271">
    <property type="term" value="C:respiratory chain complex I"/>
    <property type="evidence" value="ECO:0007669"/>
    <property type="project" value="TreeGrafter"/>
</dbReference>
<dbReference type="GO" id="GO:0051539">
    <property type="term" value="F:4 iron, 4 sulfur cluster binding"/>
    <property type="evidence" value="ECO:0007669"/>
    <property type="project" value="UniProtKB-KW"/>
</dbReference>
<dbReference type="GO" id="GO:0005506">
    <property type="term" value="F:iron ion binding"/>
    <property type="evidence" value="ECO:0007669"/>
    <property type="project" value="UniProtKB-UniRule"/>
</dbReference>
<dbReference type="GO" id="GO:0008137">
    <property type="term" value="F:NADH dehydrogenase (ubiquinone) activity"/>
    <property type="evidence" value="ECO:0007669"/>
    <property type="project" value="InterPro"/>
</dbReference>
<dbReference type="GO" id="GO:0048038">
    <property type="term" value="F:quinone binding"/>
    <property type="evidence" value="ECO:0007669"/>
    <property type="project" value="UniProtKB-KW"/>
</dbReference>
<dbReference type="GO" id="GO:0009060">
    <property type="term" value="P:aerobic respiration"/>
    <property type="evidence" value="ECO:0007669"/>
    <property type="project" value="TreeGrafter"/>
</dbReference>
<dbReference type="GO" id="GO:0015990">
    <property type="term" value="P:electron transport coupled proton transport"/>
    <property type="evidence" value="ECO:0007669"/>
    <property type="project" value="TreeGrafter"/>
</dbReference>
<dbReference type="GO" id="GO:0019684">
    <property type="term" value="P:photosynthesis, light reaction"/>
    <property type="evidence" value="ECO:0007669"/>
    <property type="project" value="UniProtKB-UniRule"/>
</dbReference>
<dbReference type="FunFam" id="3.40.50.12280:FF:000003">
    <property type="entry name" value="NAD(P)H-quinone oxidoreductase subunit K, chloroplastic"/>
    <property type="match status" value="1"/>
</dbReference>
<dbReference type="Gene3D" id="3.40.50.12280">
    <property type="match status" value="1"/>
</dbReference>
<dbReference type="HAMAP" id="MF_01356">
    <property type="entry name" value="NDH1_NuoB"/>
    <property type="match status" value="1"/>
</dbReference>
<dbReference type="InterPro" id="IPR006137">
    <property type="entry name" value="NADH_UbQ_OxRdtase-like_20kDa"/>
</dbReference>
<dbReference type="InterPro" id="IPR006138">
    <property type="entry name" value="NADH_UQ_OxRdtase_20Kd_su"/>
</dbReference>
<dbReference type="NCBIfam" id="TIGR01957">
    <property type="entry name" value="nuoB_fam"/>
    <property type="match status" value="1"/>
</dbReference>
<dbReference type="NCBIfam" id="NF005012">
    <property type="entry name" value="PRK06411.1"/>
    <property type="match status" value="1"/>
</dbReference>
<dbReference type="PANTHER" id="PTHR11995">
    <property type="entry name" value="NADH DEHYDROGENASE"/>
    <property type="match status" value="1"/>
</dbReference>
<dbReference type="PANTHER" id="PTHR11995:SF14">
    <property type="entry name" value="NADH DEHYDROGENASE [UBIQUINONE] IRON-SULFUR PROTEIN 7, MITOCHONDRIAL"/>
    <property type="match status" value="1"/>
</dbReference>
<dbReference type="Pfam" id="PF01058">
    <property type="entry name" value="Oxidored_q6"/>
    <property type="match status" value="1"/>
</dbReference>
<dbReference type="SUPFAM" id="SSF56770">
    <property type="entry name" value="HydA/Nqo6-like"/>
    <property type="match status" value="1"/>
</dbReference>
<dbReference type="PROSITE" id="PS01150">
    <property type="entry name" value="COMPLEX1_20K"/>
    <property type="match status" value="1"/>
</dbReference>
<keyword id="KW-0004">4Fe-4S</keyword>
<keyword id="KW-0150">Chloroplast</keyword>
<keyword id="KW-0408">Iron</keyword>
<keyword id="KW-0411">Iron-sulfur</keyword>
<keyword id="KW-0472">Membrane</keyword>
<keyword id="KW-0479">Metal-binding</keyword>
<keyword id="KW-0520">NAD</keyword>
<keyword id="KW-0521">NADP</keyword>
<keyword id="KW-0934">Plastid</keyword>
<keyword id="KW-0618">Plastoquinone</keyword>
<keyword id="KW-0874">Quinone</keyword>
<keyword id="KW-0793">Thylakoid</keyword>
<keyword id="KW-1278">Translocase</keyword>
<keyword id="KW-0813">Transport</keyword>
<evidence type="ECO:0000255" key="1">
    <source>
        <dbReference type="HAMAP-Rule" id="MF_01356"/>
    </source>
</evidence>
<gene>
    <name evidence="1" type="primary">ndhK</name>
</gene>